<name>TSAD_ECOL5</name>
<keyword id="KW-0012">Acyltransferase</keyword>
<keyword id="KW-0963">Cytoplasm</keyword>
<keyword id="KW-0408">Iron</keyword>
<keyword id="KW-0479">Metal-binding</keyword>
<keyword id="KW-0808">Transferase</keyword>
<keyword id="KW-0819">tRNA processing</keyword>
<proteinExistence type="inferred from homology"/>
<protein>
    <recommendedName>
        <fullName evidence="1">tRNA N6-adenosine threonylcarbamoyltransferase</fullName>
        <ecNumber evidence="1">2.3.1.234</ecNumber>
    </recommendedName>
    <alternativeName>
        <fullName evidence="1">N6-L-threonylcarbamoyladenine synthase</fullName>
        <shortName evidence="1">t(6)A synthase</shortName>
    </alternativeName>
    <alternativeName>
        <fullName evidence="1">t(6)A37 threonylcarbamoyladenosine biosynthesis protein TsaD</fullName>
    </alternativeName>
    <alternativeName>
        <fullName evidence="1">tRNA threonylcarbamoyladenosine biosynthesis protein TsaD</fullName>
    </alternativeName>
</protein>
<accession>Q0TD42</accession>
<sequence>MRVLGIETSCDETGIAIYDDEKGLLANQLYSQVKLHADYGGVVPELASRDHVRKTVPLIQEALKESGLTAKDIDAVAYTAGPGLVGALLVGATVGRSLAFAWDVPAIPVHHMEGHLLAPMLEDNPPEFPFVALLVSGGHTQLISVTGIGQYELLGESIDDAAGEAFDKTAKLLGLDYPGGPLLSKMAAQGTAGRFVFPRPMTDRPGLDFSFSGLKTFAANTIRDNGTDDQTRADIARAFEDAVVDTLMIKCKRALDQTGFKRLVMAGGVSANRTLRAKLAEMMKKRRGEVFYARPEFCTDNGAMIAYAGMVRFKAGATADLGVSVRPRWPLAELPAA</sequence>
<evidence type="ECO:0000255" key="1">
    <source>
        <dbReference type="HAMAP-Rule" id="MF_01445"/>
    </source>
</evidence>
<gene>
    <name evidence="1" type="primary">tsaD</name>
    <name type="synonym">gcp</name>
    <name type="ordered locus">ECP_3154</name>
</gene>
<feature type="chain" id="PRO_0000303362" description="tRNA N6-adenosine threonylcarbamoyltransferase">
    <location>
        <begin position="1"/>
        <end position="337"/>
    </location>
</feature>
<feature type="binding site" evidence="1">
    <location>
        <position position="111"/>
    </location>
    <ligand>
        <name>Fe cation</name>
        <dbReference type="ChEBI" id="CHEBI:24875"/>
    </ligand>
</feature>
<feature type="binding site" evidence="1">
    <location>
        <position position="115"/>
    </location>
    <ligand>
        <name>Fe cation</name>
        <dbReference type="ChEBI" id="CHEBI:24875"/>
    </ligand>
</feature>
<feature type="binding site" evidence="1">
    <location>
        <begin position="134"/>
        <end position="138"/>
    </location>
    <ligand>
        <name>substrate</name>
    </ligand>
</feature>
<feature type="binding site" evidence="1">
    <location>
        <position position="167"/>
    </location>
    <ligand>
        <name>substrate</name>
    </ligand>
</feature>
<feature type="binding site" evidence="1">
    <location>
        <position position="180"/>
    </location>
    <ligand>
        <name>substrate</name>
    </ligand>
</feature>
<feature type="binding site" evidence="1">
    <location>
        <position position="272"/>
    </location>
    <ligand>
        <name>substrate</name>
    </ligand>
</feature>
<feature type="binding site" evidence="1">
    <location>
        <position position="300"/>
    </location>
    <ligand>
        <name>Fe cation</name>
        <dbReference type="ChEBI" id="CHEBI:24875"/>
    </ligand>
</feature>
<comment type="function">
    <text evidence="1">Required for the formation of a threonylcarbamoyl group on adenosine at position 37 (t(6)A37) in tRNAs that read codons beginning with adenine. Is involved in the transfer of the threonylcarbamoyl moiety of threonylcarbamoyl-AMP (TC-AMP) to the N6 group of A37, together with TsaE and TsaB. TsaD likely plays a direct catalytic role in this reaction.</text>
</comment>
<comment type="catalytic activity">
    <reaction evidence="1">
        <text>L-threonylcarbamoyladenylate + adenosine(37) in tRNA = N(6)-L-threonylcarbamoyladenosine(37) in tRNA + AMP + H(+)</text>
        <dbReference type="Rhea" id="RHEA:37059"/>
        <dbReference type="Rhea" id="RHEA-COMP:10162"/>
        <dbReference type="Rhea" id="RHEA-COMP:10163"/>
        <dbReference type="ChEBI" id="CHEBI:15378"/>
        <dbReference type="ChEBI" id="CHEBI:73682"/>
        <dbReference type="ChEBI" id="CHEBI:74411"/>
        <dbReference type="ChEBI" id="CHEBI:74418"/>
        <dbReference type="ChEBI" id="CHEBI:456215"/>
        <dbReference type="EC" id="2.3.1.234"/>
    </reaction>
</comment>
<comment type="cofactor">
    <cofactor evidence="1">
        <name>Fe(2+)</name>
        <dbReference type="ChEBI" id="CHEBI:29033"/>
    </cofactor>
    <text evidence="1">Binds 1 Fe(2+) ion per subunit.</text>
</comment>
<comment type="subcellular location">
    <subcellularLocation>
        <location evidence="1">Cytoplasm</location>
    </subcellularLocation>
</comment>
<comment type="similarity">
    <text evidence="1">Belongs to the KAE1 / TsaD family.</text>
</comment>
<organism>
    <name type="scientific">Escherichia coli O6:K15:H31 (strain 536 / UPEC)</name>
    <dbReference type="NCBI Taxonomy" id="362663"/>
    <lineage>
        <taxon>Bacteria</taxon>
        <taxon>Pseudomonadati</taxon>
        <taxon>Pseudomonadota</taxon>
        <taxon>Gammaproteobacteria</taxon>
        <taxon>Enterobacterales</taxon>
        <taxon>Enterobacteriaceae</taxon>
        <taxon>Escherichia</taxon>
    </lineage>
</organism>
<dbReference type="EC" id="2.3.1.234" evidence="1"/>
<dbReference type="EMBL" id="CP000247">
    <property type="protein sequence ID" value="ABG71137.1"/>
    <property type="molecule type" value="Genomic_DNA"/>
</dbReference>
<dbReference type="RefSeq" id="WP_001264377.1">
    <property type="nucleotide sequence ID" value="NC_008253.1"/>
</dbReference>
<dbReference type="SMR" id="Q0TD42"/>
<dbReference type="KEGG" id="ecp:ECP_3154"/>
<dbReference type="HOGENOM" id="CLU_023208_0_2_6"/>
<dbReference type="Proteomes" id="UP000009182">
    <property type="component" value="Chromosome"/>
</dbReference>
<dbReference type="GO" id="GO:0005737">
    <property type="term" value="C:cytoplasm"/>
    <property type="evidence" value="ECO:0007669"/>
    <property type="project" value="UniProtKB-SubCell"/>
</dbReference>
<dbReference type="GO" id="GO:0005506">
    <property type="term" value="F:iron ion binding"/>
    <property type="evidence" value="ECO:0007669"/>
    <property type="project" value="UniProtKB-UniRule"/>
</dbReference>
<dbReference type="GO" id="GO:0061711">
    <property type="term" value="F:N(6)-L-threonylcarbamoyladenine synthase activity"/>
    <property type="evidence" value="ECO:0007669"/>
    <property type="project" value="UniProtKB-EC"/>
</dbReference>
<dbReference type="GO" id="GO:0002949">
    <property type="term" value="P:tRNA threonylcarbamoyladenosine modification"/>
    <property type="evidence" value="ECO:0007669"/>
    <property type="project" value="UniProtKB-UniRule"/>
</dbReference>
<dbReference type="CDD" id="cd24097">
    <property type="entry name" value="ASKHA_NBD_TsaD-like"/>
    <property type="match status" value="1"/>
</dbReference>
<dbReference type="FunFam" id="3.30.420.40:FF:000031">
    <property type="entry name" value="tRNA N6-adenosine threonylcarbamoyltransferase"/>
    <property type="match status" value="1"/>
</dbReference>
<dbReference type="Gene3D" id="3.30.420.40">
    <property type="match status" value="2"/>
</dbReference>
<dbReference type="HAMAP" id="MF_01445">
    <property type="entry name" value="TsaD"/>
    <property type="match status" value="1"/>
</dbReference>
<dbReference type="InterPro" id="IPR043129">
    <property type="entry name" value="ATPase_NBD"/>
</dbReference>
<dbReference type="InterPro" id="IPR000905">
    <property type="entry name" value="Gcp-like_dom"/>
</dbReference>
<dbReference type="InterPro" id="IPR017861">
    <property type="entry name" value="KAE1/TsaD"/>
</dbReference>
<dbReference type="InterPro" id="IPR017860">
    <property type="entry name" value="Peptidase_M22_CS"/>
</dbReference>
<dbReference type="InterPro" id="IPR022450">
    <property type="entry name" value="TsaD"/>
</dbReference>
<dbReference type="NCBIfam" id="TIGR00329">
    <property type="entry name" value="gcp_kae1"/>
    <property type="match status" value="1"/>
</dbReference>
<dbReference type="NCBIfam" id="TIGR03723">
    <property type="entry name" value="T6A_TsaD_YgjD"/>
    <property type="match status" value="1"/>
</dbReference>
<dbReference type="PANTHER" id="PTHR11735">
    <property type="entry name" value="TRNA N6-ADENOSINE THREONYLCARBAMOYLTRANSFERASE"/>
    <property type="match status" value="1"/>
</dbReference>
<dbReference type="PANTHER" id="PTHR11735:SF6">
    <property type="entry name" value="TRNA N6-ADENOSINE THREONYLCARBAMOYLTRANSFERASE, MITOCHONDRIAL"/>
    <property type="match status" value="1"/>
</dbReference>
<dbReference type="Pfam" id="PF00814">
    <property type="entry name" value="TsaD"/>
    <property type="match status" value="1"/>
</dbReference>
<dbReference type="PRINTS" id="PR00789">
    <property type="entry name" value="OSIALOPTASE"/>
</dbReference>
<dbReference type="SUPFAM" id="SSF53067">
    <property type="entry name" value="Actin-like ATPase domain"/>
    <property type="match status" value="1"/>
</dbReference>
<dbReference type="PROSITE" id="PS01016">
    <property type="entry name" value="GLYCOPROTEASE"/>
    <property type="match status" value="1"/>
</dbReference>
<reference key="1">
    <citation type="journal article" date="2006" name="Mol. Microbiol.">
        <title>Role of pathogenicity island-associated integrases in the genome plasticity of uropathogenic Escherichia coli strain 536.</title>
        <authorList>
            <person name="Hochhut B."/>
            <person name="Wilde C."/>
            <person name="Balling G."/>
            <person name="Middendorf B."/>
            <person name="Dobrindt U."/>
            <person name="Brzuszkiewicz E."/>
            <person name="Gottschalk G."/>
            <person name="Carniel E."/>
            <person name="Hacker J."/>
        </authorList>
    </citation>
    <scope>NUCLEOTIDE SEQUENCE [LARGE SCALE GENOMIC DNA]</scope>
    <source>
        <strain>536 / UPEC</strain>
    </source>
</reference>